<feature type="chain" id="PRO_1000141187" description="Anaerobic nitric oxide reductase transcription regulator NorR">
    <location>
        <begin position="1"/>
        <end position="504"/>
    </location>
</feature>
<feature type="domain" description="Sigma-54 factor interaction" evidence="1">
    <location>
        <begin position="187"/>
        <end position="416"/>
    </location>
</feature>
<feature type="DNA-binding region" description="H-T-H motif" evidence="1">
    <location>
        <begin position="479"/>
        <end position="498"/>
    </location>
</feature>
<feature type="binding site" evidence="1">
    <location>
        <begin position="215"/>
        <end position="222"/>
    </location>
    <ligand>
        <name>ATP</name>
        <dbReference type="ChEBI" id="CHEBI:30616"/>
    </ligand>
</feature>
<feature type="binding site" evidence="1">
    <location>
        <begin position="278"/>
        <end position="287"/>
    </location>
    <ligand>
        <name>ATP</name>
        <dbReference type="ChEBI" id="CHEBI:30616"/>
    </ligand>
</feature>
<feature type="modified residue" description="4-aspartylphosphate" evidence="1">
    <location>
        <position position="57"/>
    </location>
</feature>
<dbReference type="EMBL" id="CU928161">
    <property type="protein sequence ID" value="CAR04218.1"/>
    <property type="molecule type" value="Genomic_DNA"/>
</dbReference>
<dbReference type="RefSeq" id="WP_000010727.1">
    <property type="nucleotide sequence ID" value="NC_011742.1"/>
</dbReference>
<dbReference type="SMR" id="B7MKH8"/>
<dbReference type="KEGG" id="ecz:ECS88_2972"/>
<dbReference type="HOGENOM" id="CLU_000445_125_0_6"/>
<dbReference type="UniPathway" id="UPA00638"/>
<dbReference type="Proteomes" id="UP000000747">
    <property type="component" value="Chromosome"/>
</dbReference>
<dbReference type="GO" id="GO:0005524">
    <property type="term" value="F:ATP binding"/>
    <property type="evidence" value="ECO:0007669"/>
    <property type="project" value="UniProtKB-UniRule"/>
</dbReference>
<dbReference type="GO" id="GO:0016887">
    <property type="term" value="F:ATP hydrolysis activity"/>
    <property type="evidence" value="ECO:0007669"/>
    <property type="project" value="InterPro"/>
</dbReference>
<dbReference type="GO" id="GO:0003677">
    <property type="term" value="F:DNA binding"/>
    <property type="evidence" value="ECO:0007669"/>
    <property type="project" value="UniProtKB-KW"/>
</dbReference>
<dbReference type="GO" id="GO:0003700">
    <property type="term" value="F:DNA-binding transcription factor activity"/>
    <property type="evidence" value="ECO:0007669"/>
    <property type="project" value="UniProtKB-UniRule"/>
</dbReference>
<dbReference type="GO" id="GO:0000160">
    <property type="term" value="P:phosphorelay signal transduction system"/>
    <property type="evidence" value="ECO:0007669"/>
    <property type="project" value="UniProtKB-UniRule"/>
</dbReference>
<dbReference type="CDD" id="cd00009">
    <property type="entry name" value="AAA"/>
    <property type="match status" value="1"/>
</dbReference>
<dbReference type="FunFam" id="1.10.10.60:FF:000188">
    <property type="entry name" value="Anaerobic nitric oxide reductase transcription regulator NorR"/>
    <property type="match status" value="1"/>
</dbReference>
<dbReference type="FunFam" id="1.10.8.60:FF:000045">
    <property type="entry name" value="Anaerobic nitric oxide reductase transcription regulator NorR"/>
    <property type="match status" value="1"/>
</dbReference>
<dbReference type="FunFam" id="3.30.450.40:FF:000021">
    <property type="entry name" value="Anaerobic nitric oxide reductase transcription regulator NorR"/>
    <property type="match status" value="1"/>
</dbReference>
<dbReference type="FunFam" id="3.40.50.300:FF:000006">
    <property type="entry name" value="DNA-binding transcriptional regulator NtrC"/>
    <property type="match status" value="1"/>
</dbReference>
<dbReference type="Gene3D" id="1.10.8.60">
    <property type="match status" value="1"/>
</dbReference>
<dbReference type="Gene3D" id="3.30.450.40">
    <property type="match status" value="1"/>
</dbReference>
<dbReference type="Gene3D" id="1.10.10.60">
    <property type="entry name" value="Homeodomain-like"/>
    <property type="match status" value="1"/>
</dbReference>
<dbReference type="Gene3D" id="3.40.50.300">
    <property type="entry name" value="P-loop containing nucleotide triphosphate hydrolases"/>
    <property type="match status" value="1"/>
</dbReference>
<dbReference type="HAMAP" id="MF_01314">
    <property type="entry name" value="NorR"/>
    <property type="match status" value="1"/>
</dbReference>
<dbReference type="InterPro" id="IPR003593">
    <property type="entry name" value="AAA+_ATPase"/>
</dbReference>
<dbReference type="InterPro" id="IPR003018">
    <property type="entry name" value="GAF"/>
</dbReference>
<dbReference type="InterPro" id="IPR029016">
    <property type="entry name" value="GAF-like_dom_sf"/>
</dbReference>
<dbReference type="InterPro" id="IPR009057">
    <property type="entry name" value="Homeodomain-like_sf"/>
</dbReference>
<dbReference type="InterPro" id="IPR023944">
    <property type="entry name" value="NorR"/>
</dbReference>
<dbReference type="InterPro" id="IPR027417">
    <property type="entry name" value="P-loop_NTPase"/>
</dbReference>
<dbReference type="InterPro" id="IPR002078">
    <property type="entry name" value="Sigma_54_int"/>
</dbReference>
<dbReference type="InterPro" id="IPR025662">
    <property type="entry name" value="Sigma_54_int_dom_ATP-bd_1"/>
</dbReference>
<dbReference type="InterPro" id="IPR025943">
    <property type="entry name" value="Sigma_54_int_dom_ATP-bd_2"/>
</dbReference>
<dbReference type="InterPro" id="IPR025944">
    <property type="entry name" value="Sigma_54_int_dom_CS"/>
</dbReference>
<dbReference type="NCBIfam" id="NF003451">
    <property type="entry name" value="PRK05022.1"/>
    <property type="match status" value="1"/>
</dbReference>
<dbReference type="PANTHER" id="PTHR32071:SF35">
    <property type="entry name" value="ANAEROBIC NITRIC OXIDE REDUCTASE TRANSCRIPTION REGULATOR NORR"/>
    <property type="match status" value="1"/>
</dbReference>
<dbReference type="PANTHER" id="PTHR32071">
    <property type="entry name" value="TRANSCRIPTIONAL REGULATORY PROTEIN"/>
    <property type="match status" value="1"/>
</dbReference>
<dbReference type="Pfam" id="PF01590">
    <property type="entry name" value="GAF"/>
    <property type="match status" value="1"/>
</dbReference>
<dbReference type="Pfam" id="PF00158">
    <property type="entry name" value="Sigma54_activat"/>
    <property type="match status" value="1"/>
</dbReference>
<dbReference type="SMART" id="SM00382">
    <property type="entry name" value="AAA"/>
    <property type="match status" value="1"/>
</dbReference>
<dbReference type="SMART" id="SM00065">
    <property type="entry name" value="GAF"/>
    <property type="match status" value="1"/>
</dbReference>
<dbReference type="SUPFAM" id="SSF55781">
    <property type="entry name" value="GAF domain-like"/>
    <property type="match status" value="1"/>
</dbReference>
<dbReference type="SUPFAM" id="SSF46689">
    <property type="entry name" value="Homeodomain-like"/>
    <property type="match status" value="1"/>
</dbReference>
<dbReference type="SUPFAM" id="SSF52540">
    <property type="entry name" value="P-loop containing nucleoside triphosphate hydrolases"/>
    <property type="match status" value="1"/>
</dbReference>
<dbReference type="PROSITE" id="PS00675">
    <property type="entry name" value="SIGMA54_INTERACT_1"/>
    <property type="match status" value="1"/>
</dbReference>
<dbReference type="PROSITE" id="PS00676">
    <property type="entry name" value="SIGMA54_INTERACT_2"/>
    <property type="match status" value="1"/>
</dbReference>
<dbReference type="PROSITE" id="PS00688">
    <property type="entry name" value="SIGMA54_INTERACT_3"/>
    <property type="match status" value="1"/>
</dbReference>
<dbReference type="PROSITE" id="PS50045">
    <property type="entry name" value="SIGMA54_INTERACT_4"/>
    <property type="match status" value="1"/>
</dbReference>
<accession>B7MKH8</accession>
<name>NORR_ECO45</name>
<comment type="function">
    <text evidence="1">Required for the expression of anaerobic nitric oxide (NO) reductase, acts as a transcriptional activator for at least the norVW operon. Activation also requires sigma-54.</text>
</comment>
<comment type="pathway">
    <text evidence="1">Nitrogen metabolism; nitric oxide reduction.</text>
</comment>
<organism>
    <name type="scientific">Escherichia coli O45:K1 (strain S88 / ExPEC)</name>
    <dbReference type="NCBI Taxonomy" id="585035"/>
    <lineage>
        <taxon>Bacteria</taxon>
        <taxon>Pseudomonadati</taxon>
        <taxon>Pseudomonadota</taxon>
        <taxon>Gammaproteobacteria</taxon>
        <taxon>Enterobacterales</taxon>
        <taxon>Enterobacteriaceae</taxon>
        <taxon>Escherichia</taxon>
    </lineage>
</organism>
<reference key="1">
    <citation type="journal article" date="2009" name="PLoS Genet.">
        <title>Organised genome dynamics in the Escherichia coli species results in highly diverse adaptive paths.</title>
        <authorList>
            <person name="Touchon M."/>
            <person name="Hoede C."/>
            <person name="Tenaillon O."/>
            <person name="Barbe V."/>
            <person name="Baeriswyl S."/>
            <person name="Bidet P."/>
            <person name="Bingen E."/>
            <person name="Bonacorsi S."/>
            <person name="Bouchier C."/>
            <person name="Bouvet O."/>
            <person name="Calteau A."/>
            <person name="Chiapello H."/>
            <person name="Clermont O."/>
            <person name="Cruveiller S."/>
            <person name="Danchin A."/>
            <person name="Diard M."/>
            <person name="Dossat C."/>
            <person name="Karoui M.E."/>
            <person name="Frapy E."/>
            <person name="Garry L."/>
            <person name="Ghigo J.M."/>
            <person name="Gilles A.M."/>
            <person name="Johnson J."/>
            <person name="Le Bouguenec C."/>
            <person name="Lescat M."/>
            <person name="Mangenot S."/>
            <person name="Martinez-Jehanne V."/>
            <person name="Matic I."/>
            <person name="Nassif X."/>
            <person name="Oztas S."/>
            <person name="Petit M.A."/>
            <person name="Pichon C."/>
            <person name="Rouy Z."/>
            <person name="Ruf C.S."/>
            <person name="Schneider D."/>
            <person name="Tourret J."/>
            <person name="Vacherie B."/>
            <person name="Vallenet D."/>
            <person name="Medigue C."/>
            <person name="Rocha E.P.C."/>
            <person name="Denamur E."/>
        </authorList>
    </citation>
    <scope>NUCLEOTIDE SEQUENCE [LARGE SCALE GENOMIC DNA]</scope>
    <source>
        <strain>S88 / ExPEC</strain>
    </source>
</reference>
<protein>
    <recommendedName>
        <fullName evidence="1">Anaerobic nitric oxide reductase transcription regulator NorR</fullName>
    </recommendedName>
</protein>
<sequence>MSFSVDVLANIAIELQRGIGHQDRFQRLITTLRQVLECDASALLRYDSRQFIPLAIDGLAKDVLGRRFALEGHPRLEAIARAGDVVRFPADSELPDPYDGLIPGQESLKVHACVGLPLFAGQNLIGALTLDGMQPDQFDVFSDEELRLIAALAAGALSNALLIEQLESQNMLPGDAAPFEAVKQTQMIGLSPGMTQLKKEIEIVAASDLNVLISGETGTGKELVAKAIHEASPRAVNPLVYLNCAALPESVAESELFGHVKGAFTGAISNRSGKFEMADNGTLFLDEIGELSLALQAKLLRVLQYGDIQRVGDDRSLRVDVRVLAATNRDLREEVLAGRFRADLFHRLSVFPLSVPPLRERGDDVILLAGYFCEQCRLRLGLSRVVLSAGARNLLQHYNFPGNVRELEHAIHRAVVLSRATRSGDEVILEAQHFAFPEVTLPPPEAAAVPVVKQNLREATEAFQRETIRQALAQNHHNWAACARMLETDVANLHRLAKRLGLKD</sequence>
<proteinExistence type="inferred from homology"/>
<evidence type="ECO:0000255" key="1">
    <source>
        <dbReference type="HAMAP-Rule" id="MF_01314"/>
    </source>
</evidence>
<gene>
    <name evidence="1" type="primary">norR</name>
    <name type="ordered locus">ECS88_2972</name>
</gene>
<keyword id="KW-0067">ATP-binding</keyword>
<keyword id="KW-0238">DNA-binding</keyword>
<keyword id="KW-0547">Nucleotide-binding</keyword>
<keyword id="KW-0597">Phosphoprotein</keyword>
<keyword id="KW-1185">Reference proteome</keyword>
<keyword id="KW-0804">Transcription</keyword>
<keyword id="KW-0805">Transcription regulation</keyword>